<accession>P58812</accession>
<proteinExistence type="inferred from homology"/>
<protein>
    <recommendedName>
        <fullName evidence="1">2,3-bisphosphoglycerate-independent phosphoglycerate mutase</fullName>
        <shortName evidence="1">BPG-independent PGAM</shortName>
        <shortName evidence="1">Phosphoglyceromutase</shortName>
        <shortName evidence="1">aPGAM</shortName>
        <ecNumber evidence="1">5.4.2.12</ecNumber>
    </recommendedName>
</protein>
<sequence length="397" mass="42900">MKYAVLIGDGMADYPIEELGSRTILQAARTPAMDSIAARGKTGLAKTVPEGFPPGSDVANMSIFGYDPAIYYSGRAPLEAASMGVALAADDVAFRCNLITIENGKIKDYSAGHISSDEAEILIDTLDSELRTEKVRFYPGISYRHLIVAGNDLGAETECTPPHDITGERKDDYLPRGKDGEFFSGLIEASTVVLELHPVNLKRVQEGKNPANSIWVWGQGYAPKFKTFQELYGKSGAIISAVDLLKGIGIYAGLDVIEVPGATGYLDTNYEGKASAAIEALKTRDLVFVHVEAPDEAGHEGSLEKKMKAIEDFDSRIVSPILKHAEASDETFTILVLPDHPTPISVKTHTRDPIPFAIYRTDAADPDGVEYFDEESVKNGSMGLVKASDLIGMLVKV</sequence>
<dbReference type="EC" id="5.4.2.12" evidence="1"/>
<dbReference type="EMBL" id="AE010299">
    <property type="protein sequence ID" value="AAM03586.1"/>
    <property type="molecule type" value="Genomic_DNA"/>
</dbReference>
<dbReference type="RefSeq" id="WP_011020191.1">
    <property type="nucleotide sequence ID" value="NC_003552.1"/>
</dbReference>
<dbReference type="SMR" id="P58812"/>
<dbReference type="FunCoup" id="P58812">
    <property type="interactions" value="149"/>
</dbReference>
<dbReference type="STRING" id="188937.MA_0132"/>
<dbReference type="EnsemblBacteria" id="AAM03586">
    <property type="protein sequence ID" value="AAM03586"/>
    <property type="gene ID" value="MA_0132"/>
</dbReference>
<dbReference type="GeneID" id="1472024"/>
<dbReference type="KEGG" id="mac:MA_0132"/>
<dbReference type="HOGENOM" id="CLU_034906_2_0_2"/>
<dbReference type="InParanoid" id="P58812"/>
<dbReference type="OrthoDB" id="52918at2157"/>
<dbReference type="PhylomeDB" id="P58812"/>
<dbReference type="UniPathway" id="UPA00109">
    <property type="reaction ID" value="UER00186"/>
</dbReference>
<dbReference type="Proteomes" id="UP000002487">
    <property type="component" value="Chromosome"/>
</dbReference>
<dbReference type="GO" id="GO:0046872">
    <property type="term" value="F:metal ion binding"/>
    <property type="evidence" value="ECO:0007669"/>
    <property type="project" value="InterPro"/>
</dbReference>
<dbReference type="GO" id="GO:0004619">
    <property type="term" value="F:phosphoglycerate mutase activity"/>
    <property type="evidence" value="ECO:0007669"/>
    <property type="project" value="UniProtKB-EC"/>
</dbReference>
<dbReference type="GO" id="GO:0006096">
    <property type="term" value="P:glycolytic process"/>
    <property type="evidence" value="ECO:0007669"/>
    <property type="project" value="UniProtKB-UniRule"/>
</dbReference>
<dbReference type="CDD" id="cd16011">
    <property type="entry name" value="iPGM_like"/>
    <property type="match status" value="1"/>
</dbReference>
<dbReference type="Gene3D" id="3.40.720.10">
    <property type="entry name" value="Alkaline Phosphatase, subunit A"/>
    <property type="match status" value="1"/>
</dbReference>
<dbReference type="Gene3D" id="3.30.70.2130">
    <property type="entry name" value="Metalloenzyme domain"/>
    <property type="match status" value="1"/>
</dbReference>
<dbReference type="HAMAP" id="MF_01402_A">
    <property type="entry name" value="ApgM_A"/>
    <property type="match status" value="1"/>
</dbReference>
<dbReference type="InterPro" id="IPR017850">
    <property type="entry name" value="Alkaline_phosphatase_core_sf"/>
</dbReference>
<dbReference type="InterPro" id="IPR023665">
    <property type="entry name" value="ApgAM_prokaryotes"/>
</dbReference>
<dbReference type="InterPro" id="IPR006124">
    <property type="entry name" value="Metalloenzyme"/>
</dbReference>
<dbReference type="InterPro" id="IPR004456">
    <property type="entry name" value="Pglycerate_mutase_ApgM"/>
</dbReference>
<dbReference type="InterPro" id="IPR042253">
    <property type="entry name" value="Pglycerate_mutase_ApgM_sf"/>
</dbReference>
<dbReference type="NCBIfam" id="TIGR00306">
    <property type="entry name" value="apgM"/>
    <property type="match status" value="1"/>
</dbReference>
<dbReference type="NCBIfam" id="TIGR02535">
    <property type="entry name" value="hyp_Hser_kinase"/>
    <property type="match status" value="1"/>
</dbReference>
<dbReference type="NCBIfam" id="NF003242">
    <property type="entry name" value="PRK04200.1"/>
    <property type="match status" value="1"/>
</dbReference>
<dbReference type="PANTHER" id="PTHR31209:SF4">
    <property type="entry name" value="2,3-BISPHOSPHOGLYCERATE-INDEPENDENT PHOSPHOGLYCERATE MUTASE"/>
    <property type="match status" value="1"/>
</dbReference>
<dbReference type="PANTHER" id="PTHR31209">
    <property type="entry name" value="COFACTOR-INDEPENDENT PHOSPHOGLYCERATE MUTASE"/>
    <property type="match status" value="1"/>
</dbReference>
<dbReference type="Pfam" id="PF01676">
    <property type="entry name" value="Metalloenzyme"/>
    <property type="match status" value="1"/>
</dbReference>
<dbReference type="Pfam" id="PF10143">
    <property type="entry name" value="PhosphMutase"/>
    <property type="match status" value="1"/>
</dbReference>
<dbReference type="PIRSF" id="PIRSF006392">
    <property type="entry name" value="IPGAM_arch"/>
    <property type="match status" value="1"/>
</dbReference>
<dbReference type="SUPFAM" id="SSF53649">
    <property type="entry name" value="Alkaline phosphatase-like"/>
    <property type="match status" value="1"/>
</dbReference>
<name>APGM_METAC</name>
<reference key="1">
    <citation type="journal article" date="2002" name="Genome Res.">
        <title>The genome of Methanosarcina acetivorans reveals extensive metabolic and physiological diversity.</title>
        <authorList>
            <person name="Galagan J.E."/>
            <person name="Nusbaum C."/>
            <person name="Roy A."/>
            <person name="Endrizzi M.G."/>
            <person name="Macdonald P."/>
            <person name="FitzHugh W."/>
            <person name="Calvo S."/>
            <person name="Engels R."/>
            <person name="Smirnov S."/>
            <person name="Atnoor D."/>
            <person name="Brown A."/>
            <person name="Allen N."/>
            <person name="Naylor J."/>
            <person name="Stange-Thomann N."/>
            <person name="DeArellano K."/>
            <person name="Johnson R."/>
            <person name="Linton L."/>
            <person name="McEwan P."/>
            <person name="McKernan K."/>
            <person name="Talamas J."/>
            <person name="Tirrell A."/>
            <person name="Ye W."/>
            <person name="Zimmer A."/>
            <person name="Barber R.D."/>
            <person name="Cann I."/>
            <person name="Graham D.E."/>
            <person name="Grahame D.A."/>
            <person name="Guss A.M."/>
            <person name="Hedderich R."/>
            <person name="Ingram-Smith C."/>
            <person name="Kuettner H.C."/>
            <person name="Krzycki J.A."/>
            <person name="Leigh J.A."/>
            <person name="Li W."/>
            <person name="Liu J."/>
            <person name="Mukhopadhyay B."/>
            <person name="Reeve J.N."/>
            <person name="Smith K."/>
            <person name="Springer T.A."/>
            <person name="Umayam L.A."/>
            <person name="White O."/>
            <person name="White R.H."/>
            <person name="de Macario E.C."/>
            <person name="Ferry J.G."/>
            <person name="Jarrell K.F."/>
            <person name="Jing H."/>
            <person name="Macario A.J.L."/>
            <person name="Paulsen I.T."/>
            <person name="Pritchett M."/>
            <person name="Sowers K.R."/>
            <person name="Swanson R.V."/>
            <person name="Zinder S.H."/>
            <person name="Lander E."/>
            <person name="Metcalf W.W."/>
            <person name="Birren B."/>
        </authorList>
    </citation>
    <scope>NUCLEOTIDE SEQUENCE [LARGE SCALE GENOMIC DNA]</scope>
    <source>
        <strain>ATCC 35395 / DSM 2834 / JCM 12185 / C2A</strain>
    </source>
</reference>
<comment type="function">
    <text evidence="1">Catalyzes the interconversion of 2-phosphoglycerate and 3-phosphoglycerate.</text>
</comment>
<comment type="catalytic activity">
    <reaction evidence="1">
        <text>(2R)-2-phosphoglycerate = (2R)-3-phosphoglycerate</text>
        <dbReference type="Rhea" id="RHEA:15901"/>
        <dbReference type="ChEBI" id="CHEBI:58272"/>
        <dbReference type="ChEBI" id="CHEBI:58289"/>
        <dbReference type="EC" id="5.4.2.12"/>
    </reaction>
</comment>
<comment type="pathway">
    <text evidence="1">Carbohydrate degradation; glycolysis; pyruvate from D-glyceraldehyde 3-phosphate: step 3/5.</text>
</comment>
<comment type="similarity">
    <text evidence="1">Belongs to the BPG-independent phosphoglycerate mutase family. A-PGAM subfamily.</text>
</comment>
<keyword id="KW-0324">Glycolysis</keyword>
<keyword id="KW-0413">Isomerase</keyword>
<keyword id="KW-1185">Reference proteome</keyword>
<gene>
    <name evidence="1" type="primary">apgM</name>
    <name type="ordered locus">MA_0132</name>
</gene>
<evidence type="ECO:0000255" key="1">
    <source>
        <dbReference type="HAMAP-Rule" id="MF_01402"/>
    </source>
</evidence>
<organism>
    <name type="scientific">Methanosarcina acetivorans (strain ATCC 35395 / DSM 2834 / JCM 12185 / C2A)</name>
    <dbReference type="NCBI Taxonomy" id="188937"/>
    <lineage>
        <taxon>Archaea</taxon>
        <taxon>Methanobacteriati</taxon>
        <taxon>Methanobacteriota</taxon>
        <taxon>Stenosarchaea group</taxon>
        <taxon>Methanomicrobia</taxon>
        <taxon>Methanosarcinales</taxon>
        <taxon>Methanosarcinaceae</taxon>
        <taxon>Methanosarcina</taxon>
    </lineage>
</organism>
<feature type="chain" id="PRO_0000138133" description="2,3-bisphosphoglycerate-independent phosphoglycerate mutase">
    <location>
        <begin position="1"/>
        <end position="397"/>
    </location>
</feature>